<name>CSP_PLAVS</name>
<dbReference type="EMBL" id="AAKM01000017">
    <property type="protein sequence ID" value="EDL43341.1"/>
    <property type="molecule type" value="Genomic_DNA"/>
</dbReference>
<dbReference type="RefSeq" id="XP_001613068.1">
    <property type="nucleotide sequence ID" value="XM_001613018.1"/>
</dbReference>
<dbReference type="SMR" id="P13826"/>
<dbReference type="STRING" id="126793.A5KB63"/>
<dbReference type="GlyCosmos" id="P13826">
    <property type="glycosylation" value="1 site, No reported glycans"/>
</dbReference>
<dbReference type="EnsemblProtists" id="EDL43341">
    <property type="protein sequence ID" value="EDL43341"/>
    <property type="gene ID" value="PVX_119355"/>
</dbReference>
<dbReference type="KEGG" id="pvx:PVX_119355"/>
<dbReference type="VEuPathDB" id="PlasmoDB:PVX_119355"/>
<dbReference type="OMA" id="GTDPKPG"/>
<dbReference type="PhylomeDB" id="P13826"/>
<dbReference type="Proteomes" id="UP000008333">
    <property type="component" value="Chromosome 8"/>
</dbReference>
<dbReference type="GO" id="GO:0009986">
    <property type="term" value="C:cell surface"/>
    <property type="evidence" value="ECO:0007669"/>
    <property type="project" value="InterPro"/>
</dbReference>
<dbReference type="GO" id="GO:0005737">
    <property type="term" value="C:cytoplasm"/>
    <property type="evidence" value="ECO:0007669"/>
    <property type="project" value="UniProtKB-SubCell"/>
</dbReference>
<dbReference type="GO" id="GO:0005886">
    <property type="term" value="C:plasma membrane"/>
    <property type="evidence" value="ECO:0007669"/>
    <property type="project" value="UniProtKB-SubCell"/>
</dbReference>
<dbReference type="GO" id="GO:0098552">
    <property type="term" value="C:side of membrane"/>
    <property type="evidence" value="ECO:0007669"/>
    <property type="project" value="UniProtKB-KW"/>
</dbReference>
<dbReference type="Gene3D" id="2.20.100.10">
    <property type="entry name" value="Thrombospondin type-1 (TSP1) repeat"/>
    <property type="match status" value="1"/>
</dbReference>
<dbReference type="InterPro" id="IPR003067">
    <property type="entry name" value="Crcmsprzoite"/>
</dbReference>
<dbReference type="InterPro" id="IPR000884">
    <property type="entry name" value="TSP1_rpt"/>
</dbReference>
<dbReference type="InterPro" id="IPR036383">
    <property type="entry name" value="TSP1_rpt_sf"/>
</dbReference>
<dbReference type="Pfam" id="PF00090">
    <property type="entry name" value="TSP_1"/>
    <property type="match status" value="1"/>
</dbReference>
<dbReference type="PRINTS" id="PR01303">
    <property type="entry name" value="CRCMSPRZOITE"/>
</dbReference>
<dbReference type="SMART" id="SM00209">
    <property type="entry name" value="TSP1"/>
    <property type="match status" value="1"/>
</dbReference>
<dbReference type="SUPFAM" id="SSF82895">
    <property type="entry name" value="TSP-1 type 1 repeat"/>
    <property type="match status" value="1"/>
</dbReference>
<dbReference type="PROSITE" id="PS50092">
    <property type="entry name" value="TSP1"/>
    <property type="match status" value="1"/>
</dbReference>
<organism>
    <name type="scientific">Plasmodium vivax (strain Salvador I)</name>
    <dbReference type="NCBI Taxonomy" id="126793"/>
    <lineage>
        <taxon>Eukaryota</taxon>
        <taxon>Sar</taxon>
        <taxon>Alveolata</taxon>
        <taxon>Apicomplexa</taxon>
        <taxon>Aconoidasida</taxon>
        <taxon>Haemosporida</taxon>
        <taxon>Plasmodiidae</taxon>
        <taxon>Plasmodium</taxon>
        <taxon>Plasmodium (Plasmodium)</taxon>
    </lineage>
</organism>
<accession>P13826</accession>
<accession>A5KB63</accession>
<feature type="signal peptide" evidence="5">
    <location>
        <begin position="1"/>
        <end position="22"/>
    </location>
</feature>
<feature type="chain" id="PRO_0000217182" description="Circumsporozoite protein" evidence="5">
    <location>
        <begin position="23"/>
        <end position="354"/>
    </location>
</feature>
<feature type="chain" id="PRO_0000455507" description="Circumsporozoite protein C-terminus" evidence="3">
    <location>
        <begin status="unknown"/>
        <end position="354"/>
    </location>
</feature>
<feature type="propeptide" id="PRO_0000455508" description="Removed in mature form" evidence="5">
    <location>
        <begin position="355"/>
        <end position="377"/>
    </location>
</feature>
<feature type="repeat" description="1" evidence="11">
    <location>
        <begin position="95"/>
        <end position="103"/>
    </location>
</feature>
<feature type="repeat" description="2" evidence="11">
    <location>
        <begin position="104"/>
        <end position="112"/>
    </location>
</feature>
<feature type="repeat" description="3" evidence="11">
    <location>
        <begin position="113"/>
        <end position="121"/>
    </location>
</feature>
<feature type="repeat" description="4" evidence="11">
    <location>
        <begin position="122"/>
        <end position="130"/>
    </location>
</feature>
<feature type="repeat" description="5" evidence="11">
    <location>
        <begin position="131"/>
        <end position="139"/>
    </location>
</feature>
<feature type="repeat" description="6" evidence="11">
    <location>
        <begin position="140"/>
        <end position="148"/>
    </location>
</feature>
<feature type="repeat" description="7" evidence="11">
    <location>
        <begin position="149"/>
        <end position="157"/>
    </location>
</feature>
<feature type="repeat" description="8" evidence="11">
    <location>
        <begin position="158"/>
        <end position="166"/>
    </location>
</feature>
<feature type="repeat" description="9" evidence="11">
    <location>
        <begin position="167"/>
        <end position="175"/>
    </location>
</feature>
<feature type="repeat" description="10" evidence="11">
    <location>
        <begin position="176"/>
        <end position="184"/>
    </location>
</feature>
<feature type="repeat" description="11" evidence="11">
    <location>
        <begin position="185"/>
        <end position="193"/>
    </location>
</feature>
<feature type="repeat" description="12" evidence="11">
    <location>
        <begin position="194"/>
        <end position="202"/>
    </location>
</feature>
<feature type="repeat" description="13" evidence="11">
    <location>
        <begin position="203"/>
        <end position="211"/>
    </location>
</feature>
<feature type="repeat" description="14" evidence="11">
    <location>
        <begin position="212"/>
        <end position="220"/>
    </location>
</feature>
<feature type="repeat" description="15" evidence="11">
    <location>
        <begin position="221"/>
        <end position="229"/>
    </location>
</feature>
<feature type="repeat" description="16" evidence="11">
    <location>
        <begin position="230"/>
        <end position="238"/>
    </location>
</feature>
<feature type="repeat" description="17" evidence="11">
    <location>
        <begin position="239"/>
        <end position="247"/>
    </location>
</feature>
<feature type="repeat" description="18" evidence="11">
    <location>
        <begin position="248"/>
        <end position="256"/>
    </location>
</feature>
<feature type="repeat" description="19" evidence="11">
    <location>
        <begin position="257"/>
        <end position="265"/>
    </location>
</feature>
<feature type="repeat" description="20" evidence="11">
    <location>
        <begin position="266"/>
        <end position="274"/>
    </location>
</feature>
<feature type="domain" description="TSP type-1" evidence="6">
    <location>
        <begin position="303"/>
        <end position="355"/>
    </location>
</feature>
<feature type="region of interest" description="Disordered" evidence="7">
    <location>
        <begin position="51"/>
        <end position="294"/>
    </location>
</feature>
<feature type="region of interest" description="Required for the binding to heparan sulfate proteoglycans (HSPGs) on the surface of host hepatocytes" evidence="4">
    <location>
        <begin position="80"/>
        <end position="88"/>
    </location>
</feature>
<feature type="region of interest" description="Region I; contains the proteolytic cleavage site" evidence="3">
    <location>
        <begin position="91"/>
        <end position="95"/>
    </location>
</feature>
<feature type="region of interest" description="20 X 9 AA tandem repeats of [PA]-G-D-R-A-[DA]-G-Q-[PA]" evidence="11">
    <location>
        <begin position="95"/>
        <end position="274"/>
    </location>
</feature>
<feature type="compositionally biased region" description="Basic and acidic residues" evidence="7">
    <location>
        <begin position="72"/>
        <end position="100"/>
    </location>
</feature>
<feature type="compositionally biased region" description="Low complexity" evidence="7">
    <location>
        <begin position="236"/>
        <end position="273"/>
    </location>
</feature>
<feature type="compositionally biased region" description="Gly residues" evidence="7">
    <location>
        <begin position="274"/>
        <end position="283"/>
    </location>
</feature>
<feature type="compositionally biased region" description="Low complexity" evidence="7">
    <location>
        <begin position="284"/>
        <end position="293"/>
    </location>
</feature>
<feature type="lipid moiety-binding region" description="GPI-anchor amidated cysteine" evidence="5">
    <location>
        <position position="354"/>
    </location>
</feature>
<feature type="glycosylation site" description="O-linked (Fuc) threonine" evidence="2">
    <location>
        <position position="318"/>
    </location>
</feature>
<feature type="disulfide bond" evidence="4">
    <location>
        <begin position="315"/>
        <end position="349"/>
    </location>
</feature>
<feature type="disulfide bond" evidence="4">
    <location>
        <begin position="319"/>
        <end position="354"/>
    </location>
</feature>
<evidence type="ECO:0000250" key="1">
    <source>
        <dbReference type="UniProtKB" id="P02893"/>
    </source>
</evidence>
<evidence type="ECO:0000250" key="2">
    <source>
        <dbReference type="UniProtKB" id="P19597"/>
    </source>
</evidence>
<evidence type="ECO:0000250" key="3">
    <source>
        <dbReference type="UniProtKB" id="P23093"/>
    </source>
</evidence>
<evidence type="ECO:0000250" key="4">
    <source>
        <dbReference type="UniProtKB" id="Q7K740"/>
    </source>
</evidence>
<evidence type="ECO:0000255" key="5"/>
<evidence type="ECO:0000255" key="6">
    <source>
        <dbReference type="PROSITE-ProRule" id="PRU00210"/>
    </source>
</evidence>
<evidence type="ECO:0000256" key="7">
    <source>
        <dbReference type="SAM" id="MobiDB-lite"/>
    </source>
</evidence>
<evidence type="ECO:0000269" key="8">
    <source>
    </source>
</evidence>
<evidence type="ECO:0000303" key="9">
    <source>
    </source>
</evidence>
<evidence type="ECO:0000305" key="10"/>
<evidence type="ECO:0000305" key="11">
    <source>
    </source>
</evidence>
<evidence type="ECO:0000312" key="12">
    <source>
        <dbReference type="Proteomes" id="UP000008333"/>
    </source>
</evidence>
<reference evidence="12" key="1">
    <citation type="journal article" date="2008" name="Nature">
        <title>Comparative genomics of the neglected human malaria parasite Plasmodium vivax.</title>
        <authorList>
            <person name="Carlton J.M."/>
            <person name="Adams J.H."/>
            <person name="Silva J.C."/>
            <person name="Bidwell S.L."/>
            <person name="Lorenzi H."/>
            <person name="Caler E."/>
            <person name="Crabtree J."/>
            <person name="Angiuoli S.V."/>
            <person name="Merino E.F."/>
            <person name="Amedeo P."/>
            <person name="Cheng Q."/>
            <person name="Coulson R.M.R."/>
            <person name="Crabb B.S."/>
            <person name="del Portillo H.A."/>
            <person name="Essien K."/>
            <person name="Feldblyum T.V."/>
            <person name="Fernandez-Becerra C."/>
            <person name="Gilson P.R."/>
            <person name="Gueye A.H."/>
            <person name="Guo X."/>
            <person name="Kang'a S."/>
            <person name="Kooij T.W.A."/>
            <person name="Korsinczky M."/>
            <person name="Meyer E.V.-S."/>
            <person name="Nene V."/>
            <person name="Paulsen I."/>
            <person name="White O."/>
            <person name="Ralph S.A."/>
            <person name="Ren Q."/>
            <person name="Sargeant T.J."/>
            <person name="Salzberg S.L."/>
            <person name="Stoeckert C.J."/>
            <person name="Sullivan S.A."/>
            <person name="Yamamoto M.M."/>
            <person name="Hoffman S.L."/>
            <person name="Wortman J.R."/>
            <person name="Gardner M.J."/>
            <person name="Galinski M.R."/>
            <person name="Barnwell J.W."/>
            <person name="Fraser-Liggett C.M."/>
        </authorList>
    </citation>
    <scope>NUCLEOTIDE SEQUENCE [LARGE SCALE GENOMIC DNA]</scope>
    <source>
        <strain evidence="12">Salvador I</strain>
    </source>
</reference>
<reference key="2">
    <citation type="journal article" date="1985" name="Science">
        <title>Sequence of the immunodominant epitope for the surface protein on sporozoites of Plasmodium vivax.</title>
        <authorList>
            <person name="McCutchan T.F."/>
            <person name="Lal A.A."/>
            <person name="de la Cruz V.F."/>
            <person name="Miller L.H."/>
            <person name="Maloy W.L."/>
            <person name="Charoenvit Y."/>
            <person name="Beaudoin R.L."/>
            <person name="Guerry P."/>
            <person name="Wistar R. Jr."/>
            <person name="Hoffman S.L."/>
            <person name="Hockmeyer W.T."/>
            <person name="Collins W.E."/>
            <person name="Wirth D."/>
        </authorList>
    </citation>
    <scope>NUCLEOTIDE SEQUENCE OF 35-377</scope>
    <scope>REPEATS</scope>
</reference>
<reference key="3">
    <citation type="journal article" date="1987" name="J. Biol. Chem.">
        <title>Evolution of the immunodominant domain of the circumsporozoite protein gene from Plasmodium vivax. Implications for vaccines.</title>
        <authorList>
            <person name="de la Cruz V.F."/>
            <person name="Lal A.A."/>
            <person name="Welsh J.A."/>
            <person name="McCutchan T.F."/>
        </authorList>
    </citation>
    <scope>NUCLEOTIDE SEQUENCE OF 35-377</scope>
    <scope>POLYMORPHISM</scope>
</reference>
<proteinExistence type="inferred from homology"/>
<keyword id="KW-1003">Cell membrane</keyword>
<keyword id="KW-0963">Cytoplasm</keyword>
<keyword id="KW-1015">Disulfide bond</keyword>
<keyword id="KW-0325">Glycoprotein</keyword>
<keyword id="KW-0336">GPI-anchor</keyword>
<keyword id="KW-0449">Lipoprotein</keyword>
<keyword id="KW-0461">Malaria</keyword>
<keyword id="KW-0472">Membrane</keyword>
<keyword id="KW-1185">Reference proteome</keyword>
<keyword id="KW-0677">Repeat</keyword>
<keyword id="KW-0732">Signal</keyword>
<keyword id="KW-0748">Sporozoite</keyword>
<gene>
    <name evidence="3" type="primary">CSP</name>
</gene>
<comment type="function">
    <text evidence="1 3">Essential sporozoite protein (By similarity). In the mosquito vector, required for sporozoite development in the oocyst, migration through the vector hemolymph and entry into the vector salivary glands (By similarity). In the vertebrate host, required for sporozoite migration through the host dermis and infection of host hepatocytes (By similarity). Binds to highly sulfated heparan sulfate proteoglycans (HSPGs) on the surface of host hepatocytes (By similarity).</text>
</comment>
<comment type="function">
    <molecule>Circumsporozoite protein C-terminus</molecule>
    <text evidence="3">In the vertebrate host, binds to highly sulfated heparan sulfate proteoglycans (HSPGs) on the surface of host hepatocytes and is required for sporozoite invasion of the host hepatocytes.</text>
</comment>
<comment type="subcellular location">
    <subcellularLocation>
        <location evidence="2">Cell membrane</location>
        <topology evidence="5">Lipid-anchor</topology>
        <topology evidence="5">GPI-anchor</topology>
    </subcellularLocation>
    <subcellularLocation>
        <location evidence="3">Cytoplasm</location>
    </subcellularLocation>
    <text evidence="3">Localizes to the cytoplasm and the cell membrane in oocysts at day 6 post infection and then gradually distributes over the entire cell surface of the sporoblast and the budding sporozoites.</text>
</comment>
<comment type="domain">
    <text evidence="3 4">The N-terminus is involved in the initial binding to heparan sulfate proteoglycans (HSPGs) on the surface of host hepatocytes (By similarity). The N-terminus masks the TSP type-1 (TSR) domain which maintains the sporozoites in a migratory state, enabling them to complete their journey to the salivary gland in the mosquito vector and then to the host liver. The unmasking of the TSP type-1 (TSR) domain when the sporozoite interacts with the host hepatocyte also protects sporozoites from host antibodies (By similarity).</text>
</comment>
<comment type="domain">
    <text evidence="3">The TSP type-1 (TSR) domain is required for sporozoite development and invasion. CSP has two conformational states, an adhesive conformation in which the TSP type-1 (TSR) domain is exposed and a nonadhesive conformation in which the TSR is masked by the N-terminus. TSR-exposed conformation occurs during sporozoite development in the oocyst in the mosquito vector and during host hepatocyte invasion. TSR-masked conformation occurs during sporozoite migration through the hemolymph to salivary glands in the mosquito vector and in the host dermis.</text>
</comment>
<comment type="domain">
    <text evidence="3">The GPI-anchor is essential for cell membrane localization and for sporozoite formation inside the oocyst.</text>
</comment>
<comment type="PTM">
    <text evidence="1 3">During host cell invasion, proteolytically cleaved at the cell membrane in the region I by a papain-like cysteine protease of parasite origin (By similarity). Cleavage is triggered by the sporozoite contact with highly sulfated heparan sulfate proteoglycans (HSPGs) present on the host hepatocyte cell surface (By similarity). Cleavage exposes the TSP type-1 (TSR) domain and is required for productive invasion of host hepatocytes but not for adhesion to the host cell membrane (By similarity). Cleavage is dispensable for sporozoite development in the oocyst, motility and for traversal of host and vector cells (By similarity).</text>
</comment>
<comment type="PTM">
    <text evidence="2">O-glycosylated; maybe by POFUT2.</text>
</comment>
<comment type="polymorphism">
    <text evidence="8">The sequence of the repeats varies across Plasmodium species and strains.</text>
</comment>
<comment type="similarity">
    <text evidence="10">Belongs to the plasmodium circumsporozoite protein family.</text>
</comment>
<sequence length="377" mass="37875">MKNFILLAVSSILLVDLFPTHCGHNVDLSKAINLNGVNFNNVDASSLGAAHVGQSASRGRGLGENPDDEEGDAKKKKDGKKAEPKNPRENKLKQPGDRADGQPAGDRADGQPAGDRADGQPAGDRADGQPAGDRAAGQPAGDRADGQPAGDRADGQPAGDRADGQPAGDRADGQPAGDRAAGQPAGDRAAGQPAGDRADGQPAGDRAAGQPAGDRADGQPAGDRAAGQPAGDRADGQPAGDRAAGQPAGDRAAGQPAGDRAAGQAAGDRAAGQAAGGNAGGQGQNNEGANAPNEKSVKEYLDKVRATVGTEWTPCSVTCGVGVRVRRRVNAANKKPEDLTLNDLETDVCTMDKCAGIFNVVSNSLGLVILLVLALFN</sequence>
<protein>
    <recommendedName>
        <fullName evidence="9">Circumsporozoite protein</fullName>
        <shortName evidence="9">CS</shortName>
    </recommendedName>
    <component>
        <recommendedName>
            <fullName evidence="10">Circumsporozoite protein C-terminus</fullName>
        </recommendedName>
    </component>
</protein>